<organism>
    <name type="scientific">Yersinia pestis bv. Antiqua (strain Nepal516)</name>
    <dbReference type="NCBI Taxonomy" id="377628"/>
    <lineage>
        <taxon>Bacteria</taxon>
        <taxon>Pseudomonadati</taxon>
        <taxon>Pseudomonadota</taxon>
        <taxon>Gammaproteobacteria</taxon>
        <taxon>Enterobacterales</taxon>
        <taxon>Yersiniaceae</taxon>
        <taxon>Yersinia</taxon>
    </lineage>
</organism>
<proteinExistence type="inferred from homology"/>
<reference key="1">
    <citation type="journal article" date="2006" name="J. Bacteriol.">
        <title>Complete genome sequence of Yersinia pestis strains Antiqua and Nepal516: evidence of gene reduction in an emerging pathogen.</title>
        <authorList>
            <person name="Chain P.S.G."/>
            <person name="Hu P."/>
            <person name="Malfatti S.A."/>
            <person name="Radnedge L."/>
            <person name="Larimer F."/>
            <person name="Vergez L.M."/>
            <person name="Worsham P."/>
            <person name="Chu M.C."/>
            <person name="Andersen G.L."/>
        </authorList>
    </citation>
    <scope>NUCLEOTIDE SEQUENCE [LARGE SCALE GENOMIC DNA]</scope>
    <source>
        <strain>Nepal516</strain>
    </source>
</reference>
<reference key="2">
    <citation type="submission" date="2009-04" db="EMBL/GenBank/DDBJ databases">
        <title>Yersinia pestis Nepal516A whole genome shotgun sequencing project.</title>
        <authorList>
            <person name="Plunkett G. III"/>
            <person name="Anderson B.D."/>
            <person name="Baumler D.J."/>
            <person name="Burland V."/>
            <person name="Cabot E.L."/>
            <person name="Glasner J.D."/>
            <person name="Mau B."/>
            <person name="Neeno-Eckwall E."/>
            <person name="Perna N.T."/>
            <person name="Munk A.C."/>
            <person name="Tapia R."/>
            <person name="Green L.D."/>
            <person name="Rogers Y.C."/>
            <person name="Detter J.C."/>
            <person name="Bruce D.C."/>
            <person name="Brettin T.S."/>
        </authorList>
    </citation>
    <scope>NUCLEOTIDE SEQUENCE [LARGE SCALE GENOMIC DNA]</scope>
    <source>
        <strain>Nepal516</strain>
    </source>
</reference>
<name>ARND_YERPN</name>
<gene>
    <name evidence="1" type="primary">arnD</name>
    <name type="ordered locus">YPN_1873</name>
    <name type="ORF">YP516_2084</name>
</gene>
<protein>
    <recommendedName>
        <fullName evidence="1">Probable 4-deoxy-4-formamido-L-arabinose-phosphoundecaprenol deformylase ArnD</fullName>
        <ecNumber evidence="1">3.5.1.n3</ecNumber>
    </recommendedName>
</protein>
<sequence>MKQVGLRIDVDTYRGTQYGVPSLLTVLEKHDIRASFFFSVGPDNMGRHLWRLFRPRFLWKMLRSNAASLYGWDILLAGTAWPGKKIAKDFGPLMKAAAMAGHEVGLHAWDHQGWQANVASWSQQQLTEQVQRGVDTLQQSIGQPISCSAAAGWRADERVLAVKQQFDFSYNSDCRGTHPFRPLLPNGSLGSVQIPVTLPTYDEVVGGEVQAENFNDFIIDAILRDSGVSVYTIHAEVEGMSQAAMFEQLLMRAKQQDIEFCPLSKLLPSDLQLLPVGKVIRAAFPGREGWLGCQSDIKDAE</sequence>
<evidence type="ECO:0000255" key="1">
    <source>
        <dbReference type="HAMAP-Rule" id="MF_01870"/>
    </source>
</evidence>
<feature type="chain" id="PRO_0000383555" description="Probable 4-deoxy-4-formamido-L-arabinose-phosphoundecaprenol deformylase ArnD">
    <location>
        <begin position="1"/>
        <end position="301"/>
    </location>
</feature>
<feature type="domain" description="NodB homology" evidence="1">
    <location>
        <begin position="2"/>
        <end position="261"/>
    </location>
</feature>
<accession>Q1CIH8</accession>
<keyword id="KW-0046">Antibiotic resistance</keyword>
<keyword id="KW-0378">Hydrolase</keyword>
<keyword id="KW-0441">Lipid A biosynthesis</keyword>
<keyword id="KW-0444">Lipid biosynthesis</keyword>
<keyword id="KW-0443">Lipid metabolism</keyword>
<keyword id="KW-0448">Lipopolysaccharide biosynthesis</keyword>
<dbReference type="EC" id="3.5.1.n3" evidence="1"/>
<dbReference type="EMBL" id="CP000305">
    <property type="protein sequence ID" value="ABG18202.1"/>
    <property type="molecule type" value="Genomic_DNA"/>
</dbReference>
<dbReference type="EMBL" id="ACNQ01000010">
    <property type="protein sequence ID" value="EEO76777.1"/>
    <property type="molecule type" value="Genomic_DNA"/>
</dbReference>
<dbReference type="RefSeq" id="WP_002211822.1">
    <property type="nucleotide sequence ID" value="NZ_ACNQ01000010.1"/>
</dbReference>
<dbReference type="SMR" id="Q1CIH8"/>
<dbReference type="GeneID" id="57976258"/>
<dbReference type="KEGG" id="ypn:YPN_1873"/>
<dbReference type="HOGENOM" id="CLU_084199_0_0_6"/>
<dbReference type="UniPathway" id="UPA00030"/>
<dbReference type="UniPathway" id="UPA00036">
    <property type="reaction ID" value="UER00496"/>
</dbReference>
<dbReference type="Proteomes" id="UP000008936">
    <property type="component" value="Chromosome"/>
</dbReference>
<dbReference type="GO" id="GO:0016020">
    <property type="term" value="C:membrane"/>
    <property type="evidence" value="ECO:0007669"/>
    <property type="project" value="GOC"/>
</dbReference>
<dbReference type="GO" id="GO:0016811">
    <property type="term" value="F:hydrolase activity, acting on carbon-nitrogen (but not peptide) bonds, in linear amides"/>
    <property type="evidence" value="ECO:0007669"/>
    <property type="project" value="UniProtKB-UniRule"/>
</dbReference>
<dbReference type="GO" id="GO:0036108">
    <property type="term" value="P:4-amino-4-deoxy-alpha-L-arabinopyranosyl undecaprenyl phosphate biosynthetic process"/>
    <property type="evidence" value="ECO:0007669"/>
    <property type="project" value="UniProtKB-UniRule"/>
</dbReference>
<dbReference type="GO" id="GO:0009245">
    <property type="term" value="P:lipid A biosynthetic process"/>
    <property type="evidence" value="ECO:0007669"/>
    <property type="project" value="UniProtKB-UniRule"/>
</dbReference>
<dbReference type="GO" id="GO:0009103">
    <property type="term" value="P:lipopolysaccharide biosynthetic process"/>
    <property type="evidence" value="ECO:0007669"/>
    <property type="project" value="UniProtKB-UniRule"/>
</dbReference>
<dbReference type="GO" id="GO:0046677">
    <property type="term" value="P:response to antibiotic"/>
    <property type="evidence" value="ECO:0007669"/>
    <property type="project" value="UniProtKB-KW"/>
</dbReference>
<dbReference type="CDD" id="cd10939">
    <property type="entry name" value="CE4_ArnD"/>
    <property type="match status" value="1"/>
</dbReference>
<dbReference type="Gene3D" id="3.20.20.370">
    <property type="entry name" value="Glycoside hydrolase/deacetylase"/>
    <property type="match status" value="1"/>
</dbReference>
<dbReference type="HAMAP" id="MF_01870">
    <property type="entry name" value="ArnD"/>
    <property type="match status" value="1"/>
</dbReference>
<dbReference type="InterPro" id="IPR023557">
    <property type="entry name" value="ArnD"/>
</dbReference>
<dbReference type="InterPro" id="IPR011330">
    <property type="entry name" value="Glyco_hydro/deAcase_b/a-brl"/>
</dbReference>
<dbReference type="InterPro" id="IPR002509">
    <property type="entry name" value="NODB_dom"/>
</dbReference>
<dbReference type="InterPro" id="IPR050248">
    <property type="entry name" value="Polysacc_deacetylase_ArnD"/>
</dbReference>
<dbReference type="NCBIfam" id="NF011923">
    <property type="entry name" value="PRK15394.1"/>
    <property type="match status" value="1"/>
</dbReference>
<dbReference type="PANTHER" id="PTHR10587:SF137">
    <property type="entry name" value="4-DEOXY-4-FORMAMIDO-L-ARABINOSE-PHOSPHOUNDECAPRENOL DEFORMYLASE ARND-RELATED"/>
    <property type="match status" value="1"/>
</dbReference>
<dbReference type="PANTHER" id="PTHR10587">
    <property type="entry name" value="GLYCOSYL TRANSFERASE-RELATED"/>
    <property type="match status" value="1"/>
</dbReference>
<dbReference type="Pfam" id="PF01522">
    <property type="entry name" value="Polysacc_deac_1"/>
    <property type="match status" value="1"/>
</dbReference>
<dbReference type="SUPFAM" id="SSF88713">
    <property type="entry name" value="Glycoside hydrolase/deacetylase"/>
    <property type="match status" value="1"/>
</dbReference>
<dbReference type="PROSITE" id="PS51677">
    <property type="entry name" value="NODB"/>
    <property type="match status" value="1"/>
</dbReference>
<comment type="function">
    <text evidence="1">Catalyzes the deformylation of 4-deoxy-4-formamido-L-arabinose-phosphoundecaprenol to 4-amino-4-deoxy-L-arabinose-phosphoundecaprenol. The modified arabinose is attached to lipid A and is required for resistance to polymyxin and cationic antimicrobial peptides.</text>
</comment>
<comment type="catalytic activity">
    <reaction evidence="1">
        <text>4-deoxy-4-formamido-alpha-L-arabinopyranosyl di-trans,octa-cis-undecaprenyl phosphate + H2O = 4-amino-4-deoxy-alpha-L-arabinopyranosyl di-trans,octa-cis-undecaprenyl phosphate + formate</text>
        <dbReference type="Rhea" id="RHEA:27734"/>
        <dbReference type="ChEBI" id="CHEBI:15377"/>
        <dbReference type="ChEBI" id="CHEBI:15740"/>
        <dbReference type="ChEBI" id="CHEBI:58909"/>
        <dbReference type="ChEBI" id="CHEBI:60463"/>
        <dbReference type="EC" id="3.5.1.n3"/>
    </reaction>
</comment>
<comment type="pathway">
    <text evidence="1">Glycolipid biosynthesis; 4-amino-4-deoxy-alpha-L-arabinose undecaprenyl phosphate biosynthesis; 4-amino-4-deoxy-alpha-L-arabinose undecaprenyl phosphate from UDP-4-deoxy-4-formamido-beta-L-arabinose and undecaprenyl phosphate: step 2/2.</text>
</comment>
<comment type="pathway">
    <text evidence="1">Bacterial outer membrane biogenesis; lipopolysaccharide biosynthesis.</text>
</comment>
<comment type="similarity">
    <text evidence="1">Belongs to the polysaccharide deacetylase family. ArnD deformylase subfamily.</text>
</comment>